<feature type="chain" id="PRO_1000090124" description="Glutamate--tRNA ligase">
    <location>
        <begin position="1"/>
        <end position="467"/>
    </location>
</feature>
<feature type="short sequence motif" description="'HIGH' region" evidence="1">
    <location>
        <begin position="9"/>
        <end position="19"/>
    </location>
</feature>
<feature type="short sequence motif" description="'KMSKS' region" evidence="1">
    <location>
        <begin position="237"/>
        <end position="241"/>
    </location>
</feature>
<feature type="binding site" evidence="1">
    <location>
        <position position="240"/>
    </location>
    <ligand>
        <name>ATP</name>
        <dbReference type="ChEBI" id="CHEBI:30616"/>
    </ligand>
</feature>
<evidence type="ECO:0000255" key="1">
    <source>
        <dbReference type="HAMAP-Rule" id="MF_00022"/>
    </source>
</evidence>
<protein>
    <recommendedName>
        <fullName evidence="1">Glutamate--tRNA ligase</fullName>
        <ecNumber evidence="1">6.1.1.17</ecNumber>
    </recommendedName>
    <alternativeName>
        <fullName evidence="1">Glutamyl-tRNA synthetase</fullName>
        <shortName evidence="1">GluRS</shortName>
    </alternativeName>
</protein>
<accession>B2I994</accession>
<dbReference type="EC" id="6.1.1.17" evidence="1"/>
<dbReference type="EMBL" id="CP001011">
    <property type="protein sequence ID" value="ACB93349.1"/>
    <property type="molecule type" value="Genomic_DNA"/>
</dbReference>
<dbReference type="RefSeq" id="WP_004088131.1">
    <property type="nucleotide sequence ID" value="NC_010577.1"/>
</dbReference>
<dbReference type="SMR" id="B2I994"/>
<dbReference type="GeneID" id="93905704"/>
<dbReference type="KEGG" id="xfn:XfasM23_1950"/>
<dbReference type="HOGENOM" id="CLU_015768_6_0_6"/>
<dbReference type="Proteomes" id="UP000001698">
    <property type="component" value="Chromosome"/>
</dbReference>
<dbReference type="GO" id="GO:0005829">
    <property type="term" value="C:cytosol"/>
    <property type="evidence" value="ECO:0007669"/>
    <property type="project" value="TreeGrafter"/>
</dbReference>
<dbReference type="GO" id="GO:0005524">
    <property type="term" value="F:ATP binding"/>
    <property type="evidence" value="ECO:0007669"/>
    <property type="project" value="UniProtKB-UniRule"/>
</dbReference>
<dbReference type="GO" id="GO:0004818">
    <property type="term" value="F:glutamate-tRNA ligase activity"/>
    <property type="evidence" value="ECO:0007669"/>
    <property type="project" value="UniProtKB-UniRule"/>
</dbReference>
<dbReference type="GO" id="GO:0000049">
    <property type="term" value="F:tRNA binding"/>
    <property type="evidence" value="ECO:0007669"/>
    <property type="project" value="InterPro"/>
</dbReference>
<dbReference type="GO" id="GO:0008270">
    <property type="term" value="F:zinc ion binding"/>
    <property type="evidence" value="ECO:0007669"/>
    <property type="project" value="InterPro"/>
</dbReference>
<dbReference type="GO" id="GO:0006424">
    <property type="term" value="P:glutamyl-tRNA aminoacylation"/>
    <property type="evidence" value="ECO:0007669"/>
    <property type="project" value="UniProtKB-UniRule"/>
</dbReference>
<dbReference type="CDD" id="cd00808">
    <property type="entry name" value="GluRS_core"/>
    <property type="match status" value="1"/>
</dbReference>
<dbReference type="FunFam" id="3.40.50.620:FF:000007">
    <property type="entry name" value="Glutamate--tRNA ligase"/>
    <property type="match status" value="1"/>
</dbReference>
<dbReference type="Gene3D" id="1.10.10.350">
    <property type="match status" value="1"/>
</dbReference>
<dbReference type="Gene3D" id="3.40.50.620">
    <property type="entry name" value="HUPs"/>
    <property type="match status" value="1"/>
</dbReference>
<dbReference type="HAMAP" id="MF_00022">
    <property type="entry name" value="Glu_tRNA_synth_type1"/>
    <property type="match status" value="1"/>
</dbReference>
<dbReference type="InterPro" id="IPR045462">
    <property type="entry name" value="aa-tRNA-synth_I_cd-bd"/>
</dbReference>
<dbReference type="InterPro" id="IPR020751">
    <property type="entry name" value="aa-tRNA-synth_I_codon-bd_sub2"/>
</dbReference>
<dbReference type="InterPro" id="IPR001412">
    <property type="entry name" value="aa-tRNA-synth_I_CS"/>
</dbReference>
<dbReference type="InterPro" id="IPR008925">
    <property type="entry name" value="aa_tRNA-synth_I_cd-bd_sf"/>
</dbReference>
<dbReference type="InterPro" id="IPR004527">
    <property type="entry name" value="Glu-tRNA-ligase_bac/mito"/>
</dbReference>
<dbReference type="InterPro" id="IPR000924">
    <property type="entry name" value="Glu/Gln-tRNA-synth"/>
</dbReference>
<dbReference type="InterPro" id="IPR020058">
    <property type="entry name" value="Glu/Gln-tRNA-synth_Ib_cat-dom"/>
</dbReference>
<dbReference type="InterPro" id="IPR049940">
    <property type="entry name" value="GluQ/Sye"/>
</dbReference>
<dbReference type="InterPro" id="IPR033910">
    <property type="entry name" value="GluRS_core"/>
</dbReference>
<dbReference type="InterPro" id="IPR014729">
    <property type="entry name" value="Rossmann-like_a/b/a_fold"/>
</dbReference>
<dbReference type="NCBIfam" id="TIGR00464">
    <property type="entry name" value="gltX_bact"/>
    <property type="match status" value="1"/>
</dbReference>
<dbReference type="PANTHER" id="PTHR43311">
    <property type="entry name" value="GLUTAMATE--TRNA LIGASE"/>
    <property type="match status" value="1"/>
</dbReference>
<dbReference type="PANTHER" id="PTHR43311:SF2">
    <property type="entry name" value="GLUTAMATE--TRNA LIGASE, MITOCHONDRIAL-RELATED"/>
    <property type="match status" value="1"/>
</dbReference>
<dbReference type="Pfam" id="PF19269">
    <property type="entry name" value="Anticodon_2"/>
    <property type="match status" value="1"/>
</dbReference>
<dbReference type="Pfam" id="PF00749">
    <property type="entry name" value="tRNA-synt_1c"/>
    <property type="match status" value="1"/>
</dbReference>
<dbReference type="PRINTS" id="PR00987">
    <property type="entry name" value="TRNASYNTHGLU"/>
</dbReference>
<dbReference type="SUPFAM" id="SSF48163">
    <property type="entry name" value="An anticodon-binding domain of class I aminoacyl-tRNA synthetases"/>
    <property type="match status" value="1"/>
</dbReference>
<dbReference type="SUPFAM" id="SSF52374">
    <property type="entry name" value="Nucleotidylyl transferase"/>
    <property type="match status" value="1"/>
</dbReference>
<dbReference type="PROSITE" id="PS00178">
    <property type="entry name" value="AA_TRNA_LIGASE_I"/>
    <property type="match status" value="1"/>
</dbReference>
<name>SYE_XYLF2</name>
<comment type="function">
    <text evidence="1">Catalyzes the attachment of glutamate to tRNA(Glu) in a two-step reaction: glutamate is first activated by ATP to form Glu-AMP and then transferred to the acceptor end of tRNA(Glu).</text>
</comment>
<comment type="catalytic activity">
    <reaction evidence="1">
        <text>tRNA(Glu) + L-glutamate + ATP = L-glutamyl-tRNA(Glu) + AMP + diphosphate</text>
        <dbReference type="Rhea" id="RHEA:23540"/>
        <dbReference type="Rhea" id="RHEA-COMP:9663"/>
        <dbReference type="Rhea" id="RHEA-COMP:9680"/>
        <dbReference type="ChEBI" id="CHEBI:29985"/>
        <dbReference type="ChEBI" id="CHEBI:30616"/>
        <dbReference type="ChEBI" id="CHEBI:33019"/>
        <dbReference type="ChEBI" id="CHEBI:78442"/>
        <dbReference type="ChEBI" id="CHEBI:78520"/>
        <dbReference type="ChEBI" id="CHEBI:456215"/>
        <dbReference type="EC" id="6.1.1.17"/>
    </reaction>
</comment>
<comment type="subunit">
    <text evidence="1">Monomer.</text>
</comment>
<comment type="subcellular location">
    <subcellularLocation>
        <location evidence="1">Cytoplasm</location>
    </subcellularLocation>
</comment>
<comment type="similarity">
    <text evidence="1">Belongs to the class-I aminoacyl-tRNA synthetase family. Glutamate--tRNA ligase type 1 subfamily.</text>
</comment>
<keyword id="KW-0030">Aminoacyl-tRNA synthetase</keyword>
<keyword id="KW-0067">ATP-binding</keyword>
<keyword id="KW-0963">Cytoplasm</keyword>
<keyword id="KW-0436">Ligase</keyword>
<keyword id="KW-0547">Nucleotide-binding</keyword>
<keyword id="KW-0648">Protein biosynthesis</keyword>
<gene>
    <name evidence="1" type="primary">gltX</name>
    <name type="ordered locus">XfasM23_1950</name>
</gene>
<reference key="1">
    <citation type="journal article" date="2010" name="J. Bacteriol.">
        <title>Whole genome sequences of two Xylella fastidiosa strains (M12 and M23) causing almond leaf scorch disease in California.</title>
        <authorList>
            <person name="Chen J."/>
            <person name="Xie G."/>
            <person name="Han S."/>
            <person name="Chertkov O."/>
            <person name="Sims D."/>
            <person name="Civerolo E.L."/>
        </authorList>
    </citation>
    <scope>NUCLEOTIDE SEQUENCE [LARGE SCALE GENOMIC DNA]</scope>
    <source>
        <strain>M23</strain>
    </source>
</reference>
<sequence>MTCRTRFAPSPTGYLHIGGARTALYCWLEARRRNGQFLLRIEDTDRERSTQAAIDAILHAMDWLGLDYDEPPVYQTQRIERYNQVAARLLAEGKAYYAYDSKDTLNAMREAALRTGEKPRYNGAAREANLPYRDDPNRVIRFKNPHTGTVAFDDLIKGRIQISNSELDDMVILRPDGYPTYNFAVVVDDWDMNITEVIRGDDHINNTPRQINLYHALGAPLPTFAHLPMILDEQGAKLSKRTGAADVMQYRDSGYLPHALINYLVRLGWSHGDQELFNRQALIDLFQINDVNSKAARLDMAKLGWVNQHYLKTDDPATLAPPLVWHLEQRGIDVSAGPAPTDVILALRERVQTLKEMAEKAEIWYCPLQRYDEIAVAKHLKPGAETALLHARTLLAALPAWTVDNVDTALRTTATTLEIGMGKVAQPLRVAITGTQVSPDIAYTVYLTGRNEALKRIDAALIKISTA</sequence>
<proteinExistence type="inferred from homology"/>
<organism>
    <name type="scientific">Xylella fastidiosa (strain M23)</name>
    <dbReference type="NCBI Taxonomy" id="405441"/>
    <lineage>
        <taxon>Bacteria</taxon>
        <taxon>Pseudomonadati</taxon>
        <taxon>Pseudomonadota</taxon>
        <taxon>Gammaproteobacteria</taxon>
        <taxon>Lysobacterales</taxon>
        <taxon>Lysobacteraceae</taxon>
        <taxon>Xylella</taxon>
    </lineage>
</organism>